<gene>
    <name type="primary">luxS</name>
    <name type="ordered locus">HP_0105</name>
</gene>
<organism>
    <name type="scientific">Helicobacter pylori (strain ATCC 700392 / 26695)</name>
    <name type="common">Campylobacter pylori</name>
    <dbReference type="NCBI Taxonomy" id="85962"/>
    <lineage>
        <taxon>Bacteria</taxon>
        <taxon>Pseudomonadati</taxon>
        <taxon>Campylobacterota</taxon>
        <taxon>Epsilonproteobacteria</taxon>
        <taxon>Campylobacterales</taxon>
        <taxon>Helicobacteraceae</taxon>
        <taxon>Helicobacter</taxon>
    </lineage>
</organism>
<accession>O24931</accession>
<protein>
    <recommendedName>
        <fullName>S-ribosylhomocysteine lyase</fullName>
        <ecNumber>4.4.1.21</ecNumber>
    </recommendedName>
    <alternativeName>
        <fullName>AI-2 synthesis protein</fullName>
    </alternativeName>
    <alternativeName>
        <fullName>Autoinducer-2 production protein LuxS</fullName>
    </alternativeName>
</protein>
<comment type="function">
    <text evidence="1">Involved in the synthesis of autoinducer 2 (AI-2) which is secreted by bacteria and is used to communicate both the cell density and the metabolic potential of the environment. The regulation of gene expression in response to changes in cell density is called quorum sensing. Catalyzes the transformation of S-ribosylhomocysteine (RHC) to homocysteine (HC) and 4,5-dihydroxy-2,3-pentadione (DPD) (By similarity).</text>
</comment>
<comment type="catalytic activity">
    <reaction>
        <text>S-(5-deoxy-D-ribos-5-yl)-L-homocysteine = (S)-4,5-dihydroxypentane-2,3-dione + L-homocysteine</text>
        <dbReference type="Rhea" id="RHEA:17753"/>
        <dbReference type="ChEBI" id="CHEBI:29484"/>
        <dbReference type="ChEBI" id="CHEBI:58195"/>
        <dbReference type="ChEBI" id="CHEBI:58199"/>
        <dbReference type="EC" id="4.4.1.21"/>
    </reaction>
</comment>
<comment type="cofactor">
    <cofactor evidence="1">
        <name>Fe cation</name>
        <dbReference type="ChEBI" id="CHEBI:24875"/>
    </cofactor>
    <text evidence="1">Binds 1 Fe cation per subunit.</text>
</comment>
<comment type="subunit">
    <text evidence="1">Homodimer.</text>
</comment>
<comment type="similarity">
    <text evidence="2">Belongs to the LuxS family.</text>
</comment>
<dbReference type="EC" id="4.4.1.21"/>
<dbReference type="EMBL" id="AE000511">
    <property type="protein sequence ID" value="AAD07175.1"/>
    <property type="molecule type" value="Genomic_DNA"/>
</dbReference>
<dbReference type="PIR" id="A64533">
    <property type="entry name" value="A64533"/>
</dbReference>
<dbReference type="RefSeq" id="WP_000856671.1">
    <property type="nucleotide sequence ID" value="NC_018939.1"/>
</dbReference>
<dbReference type="SMR" id="O24931"/>
<dbReference type="DIP" id="DIP-3186N"/>
<dbReference type="FunCoup" id="O24931">
    <property type="interactions" value="132"/>
</dbReference>
<dbReference type="IntAct" id="O24931">
    <property type="interactions" value="1"/>
</dbReference>
<dbReference type="MINT" id="O24931"/>
<dbReference type="STRING" id="85962.HP_0105"/>
<dbReference type="PaxDb" id="85962-C694_00520"/>
<dbReference type="EnsemblBacteria" id="AAD07175">
    <property type="protein sequence ID" value="AAD07175"/>
    <property type="gene ID" value="HP_0105"/>
</dbReference>
<dbReference type="KEGG" id="heo:C694_00520"/>
<dbReference type="KEGG" id="hpy:HP_0105"/>
<dbReference type="PATRIC" id="fig|85962.47.peg.114"/>
<dbReference type="eggNOG" id="COG1854">
    <property type="taxonomic scope" value="Bacteria"/>
</dbReference>
<dbReference type="InParanoid" id="O24931"/>
<dbReference type="PhylomeDB" id="O24931"/>
<dbReference type="BioCyc" id="MetaCyc:HP_RS00535-MONOMER"/>
<dbReference type="Proteomes" id="UP000000429">
    <property type="component" value="Chromosome"/>
</dbReference>
<dbReference type="GO" id="GO:0005829">
    <property type="term" value="C:cytosol"/>
    <property type="evidence" value="ECO:0000318"/>
    <property type="project" value="GO_Central"/>
</dbReference>
<dbReference type="GO" id="GO:0005506">
    <property type="term" value="F:iron ion binding"/>
    <property type="evidence" value="ECO:0007669"/>
    <property type="project" value="InterPro"/>
</dbReference>
<dbReference type="GO" id="GO:0043768">
    <property type="term" value="F:S-ribosylhomocysteine lyase activity"/>
    <property type="evidence" value="ECO:0000318"/>
    <property type="project" value="GO_Central"/>
</dbReference>
<dbReference type="GO" id="GO:0019284">
    <property type="term" value="P:L-methionine salvage from S-adenosylmethionine"/>
    <property type="evidence" value="ECO:0000318"/>
    <property type="project" value="GO_Central"/>
</dbReference>
<dbReference type="GO" id="GO:0009372">
    <property type="term" value="P:quorum sensing"/>
    <property type="evidence" value="ECO:0007669"/>
    <property type="project" value="UniProtKB-UniRule"/>
</dbReference>
<dbReference type="Gene3D" id="3.30.1360.80">
    <property type="entry name" value="S-ribosylhomocysteinase (LuxS)"/>
    <property type="match status" value="1"/>
</dbReference>
<dbReference type="HAMAP" id="MF_00091">
    <property type="entry name" value="LuxS"/>
    <property type="match status" value="1"/>
</dbReference>
<dbReference type="InterPro" id="IPR037005">
    <property type="entry name" value="LuxS_sf"/>
</dbReference>
<dbReference type="InterPro" id="IPR011249">
    <property type="entry name" value="Metalloenz_LuxS/M16"/>
</dbReference>
<dbReference type="InterPro" id="IPR003815">
    <property type="entry name" value="S-ribosylhomocysteinase"/>
</dbReference>
<dbReference type="NCBIfam" id="NF002604">
    <property type="entry name" value="PRK02260.1-4"/>
    <property type="match status" value="1"/>
</dbReference>
<dbReference type="PANTHER" id="PTHR35799">
    <property type="entry name" value="S-RIBOSYLHOMOCYSTEINE LYASE"/>
    <property type="match status" value="1"/>
</dbReference>
<dbReference type="PANTHER" id="PTHR35799:SF1">
    <property type="entry name" value="S-RIBOSYLHOMOCYSTEINE LYASE"/>
    <property type="match status" value="1"/>
</dbReference>
<dbReference type="Pfam" id="PF02664">
    <property type="entry name" value="LuxS"/>
    <property type="match status" value="1"/>
</dbReference>
<dbReference type="PIRSF" id="PIRSF006160">
    <property type="entry name" value="AI2"/>
    <property type="match status" value="1"/>
</dbReference>
<dbReference type="PRINTS" id="PR01487">
    <property type="entry name" value="LUXSPROTEIN"/>
</dbReference>
<dbReference type="SUPFAM" id="SSF63411">
    <property type="entry name" value="LuxS/MPP-like metallohydrolase"/>
    <property type="match status" value="1"/>
</dbReference>
<sequence length="155" mass="17655">MKTPKMNVESFNLDHTKVKAPYVRVADRKKGVNGDLIVKYDVRFKQPNQDHMDMPSLHSLEHLVAEIIRNHASYVVDWSPMGCQTGFYLTVLNHDNYTEILEVLEKTMQDVLKATEVPASNEKQCGWAANHTLEGAKDLARAFLDKRAEWSEVGV</sequence>
<reference key="1">
    <citation type="journal article" date="1997" name="Nature">
        <title>The complete genome sequence of the gastric pathogen Helicobacter pylori.</title>
        <authorList>
            <person name="Tomb J.-F."/>
            <person name="White O."/>
            <person name="Kerlavage A.R."/>
            <person name="Clayton R.A."/>
            <person name="Sutton G.G."/>
            <person name="Fleischmann R.D."/>
            <person name="Ketchum K.A."/>
            <person name="Klenk H.-P."/>
            <person name="Gill S.R."/>
            <person name="Dougherty B.A."/>
            <person name="Nelson K.E."/>
            <person name="Quackenbush J."/>
            <person name="Zhou L."/>
            <person name="Kirkness E.F."/>
            <person name="Peterson S.N."/>
            <person name="Loftus B.J."/>
            <person name="Richardson D.L."/>
            <person name="Dodson R.J."/>
            <person name="Khalak H.G."/>
            <person name="Glodek A."/>
            <person name="McKenney K."/>
            <person name="FitzGerald L.M."/>
            <person name="Lee N."/>
            <person name="Adams M.D."/>
            <person name="Hickey E.K."/>
            <person name="Berg D.E."/>
            <person name="Gocayne J.D."/>
            <person name="Utterback T.R."/>
            <person name="Peterson J.D."/>
            <person name="Kelley J.M."/>
            <person name="Cotton M.D."/>
            <person name="Weidman J.F."/>
            <person name="Fujii C."/>
            <person name="Bowman C."/>
            <person name="Watthey L."/>
            <person name="Wallin E."/>
            <person name="Hayes W.S."/>
            <person name="Borodovsky M."/>
            <person name="Karp P.D."/>
            <person name="Smith H.O."/>
            <person name="Fraser C.M."/>
            <person name="Venter J.C."/>
        </authorList>
    </citation>
    <scope>NUCLEOTIDE SEQUENCE [LARGE SCALE GENOMIC DNA]</scope>
    <source>
        <strain>ATCC 700392 / 26695</strain>
    </source>
</reference>
<evidence type="ECO:0000250" key="1"/>
<evidence type="ECO:0000305" key="2"/>
<feature type="chain" id="PRO_0000172229" description="S-ribosylhomocysteine lyase">
    <location>
        <begin position="1"/>
        <end position="155"/>
    </location>
</feature>
<feature type="binding site" evidence="1">
    <location>
        <position position="58"/>
    </location>
    <ligand>
        <name>Fe cation</name>
        <dbReference type="ChEBI" id="CHEBI:24875"/>
    </ligand>
</feature>
<feature type="binding site" evidence="1">
    <location>
        <position position="62"/>
    </location>
    <ligand>
        <name>Fe cation</name>
        <dbReference type="ChEBI" id="CHEBI:24875"/>
    </ligand>
</feature>
<feature type="binding site" evidence="1">
    <location>
        <position position="125"/>
    </location>
    <ligand>
        <name>Fe cation</name>
        <dbReference type="ChEBI" id="CHEBI:24875"/>
    </ligand>
</feature>
<proteinExistence type="inferred from homology"/>
<name>LUXS_HELPY</name>
<keyword id="KW-0071">Autoinducer synthesis</keyword>
<keyword id="KW-0408">Iron</keyword>
<keyword id="KW-0456">Lyase</keyword>
<keyword id="KW-0479">Metal-binding</keyword>
<keyword id="KW-0673">Quorum sensing</keyword>
<keyword id="KW-1185">Reference proteome</keyword>